<name>IF2_ECO8A</name>
<keyword id="KW-0007">Acetylation</keyword>
<keyword id="KW-0963">Cytoplasm</keyword>
<keyword id="KW-0342">GTP-binding</keyword>
<keyword id="KW-0396">Initiation factor</keyword>
<keyword id="KW-0547">Nucleotide-binding</keyword>
<keyword id="KW-0648">Protein biosynthesis</keyword>
<sequence length="890" mass="97350">MTDVTIKTLAAERQTSVERLVQQFADAGIRKSADDSVSAQEKQTLIDHLNQKNSGPDKLTLQRKTRSTLNIPGTGGKSKSVQIEVRKKRTFVKRDPQEAERLAAEEQAQREAEEQARREAEESAKREAQQKAEREAAEQAKREAAEQAKREAAEKDKVSNQQDDMTKNAQAEKARREQEAAELKRKAEEEARRKLEEEARRVAEEARRMAEENKWTDNAEPTEDSSDYHVTTSQHARQAEDESDREVEGGRGRGRNAKAARPKKGNKHAESKADREEARAAVRGGKGGKRKGSSLQQGFQKPAQAVNRDVVIGETITVGELANKMAVKGSQVIKAMMKLGAMATINQVIDQETAQLVAEEMGHKVILRRENELEEAVMSDRDTGAAAEPRAPVVTIMGHVDHGKTSLLDYIRSTKVASGEAGGITQHIGAYHVETENGMITFLDTPGHAAFTSMRARGAQATDIVVLVVAADDGVMPQTIEAIQHAKAAQVPVVVAVNKIDKPEADPDRVKNELSQYGILPEEWGGESQFVHVSAKAGTGIDELLDAILLQAEVLELKAVRKGMASGAVIESFLDKGRGPVATVLVREGTLHKGDIVLCGFEYGRVRAMRNELGQEVLEAGPSIPVEILGLSGVPAAGDEVTVVRDEKKAREVALYRQGKFREVKLARQQKSKLENMFANMTEGEVHEVNIVLKADVQGSVEAISDSLLKLSTDEVKVKIIGSGVGGITETDATLAAASNAILVGFNVRADASARKVIEAESLDLRYYSVIYNLIDEVKAAMSGMLSPELKQQIIGLAEVRDVFKSPKFGAIAGCMVTEGVVKRHNPIRVLRDNVVIYEGELESLRRFKDDVNEVRNGMECGIGVKNYNDVRTGDVIEVFEIIEIQRTIA</sequence>
<proteinExistence type="inferred from homology"/>
<evidence type="ECO:0000250" key="1"/>
<evidence type="ECO:0000255" key="2">
    <source>
        <dbReference type="HAMAP-Rule" id="MF_00100"/>
    </source>
</evidence>
<evidence type="ECO:0000256" key="3">
    <source>
        <dbReference type="SAM" id="MobiDB-lite"/>
    </source>
</evidence>
<reference key="1">
    <citation type="journal article" date="2009" name="PLoS Genet.">
        <title>Organised genome dynamics in the Escherichia coli species results in highly diverse adaptive paths.</title>
        <authorList>
            <person name="Touchon M."/>
            <person name="Hoede C."/>
            <person name="Tenaillon O."/>
            <person name="Barbe V."/>
            <person name="Baeriswyl S."/>
            <person name="Bidet P."/>
            <person name="Bingen E."/>
            <person name="Bonacorsi S."/>
            <person name="Bouchier C."/>
            <person name="Bouvet O."/>
            <person name="Calteau A."/>
            <person name="Chiapello H."/>
            <person name="Clermont O."/>
            <person name="Cruveiller S."/>
            <person name="Danchin A."/>
            <person name="Diard M."/>
            <person name="Dossat C."/>
            <person name="Karoui M.E."/>
            <person name="Frapy E."/>
            <person name="Garry L."/>
            <person name="Ghigo J.M."/>
            <person name="Gilles A.M."/>
            <person name="Johnson J."/>
            <person name="Le Bouguenec C."/>
            <person name="Lescat M."/>
            <person name="Mangenot S."/>
            <person name="Martinez-Jehanne V."/>
            <person name="Matic I."/>
            <person name="Nassif X."/>
            <person name="Oztas S."/>
            <person name="Petit M.A."/>
            <person name="Pichon C."/>
            <person name="Rouy Z."/>
            <person name="Ruf C.S."/>
            <person name="Schneider D."/>
            <person name="Tourret J."/>
            <person name="Vacherie B."/>
            <person name="Vallenet D."/>
            <person name="Medigue C."/>
            <person name="Rocha E.P.C."/>
            <person name="Denamur E."/>
        </authorList>
    </citation>
    <scope>NUCLEOTIDE SEQUENCE [LARGE SCALE GENOMIC DNA]</scope>
    <source>
        <strain>IAI1</strain>
    </source>
</reference>
<organism>
    <name type="scientific">Escherichia coli O8 (strain IAI1)</name>
    <dbReference type="NCBI Taxonomy" id="585034"/>
    <lineage>
        <taxon>Bacteria</taxon>
        <taxon>Pseudomonadati</taxon>
        <taxon>Pseudomonadota</taxon>
        <taxon>Gammaproteobacteria</taxon>
        <taxon>Enterobacterales</taxon>
        <taxon>Enterobacteriaceae</taxon>
        <taxon>Escherichia</taxon>
    </lineage>
</organism>
<feature type="chain" id="PRO_1000117330" description="Translation initiation factor IF-2">
    <location>
        <begin position="1"/>
        <end position="890"/>
    </location>
</feature>
<feature type="domain" description="tr-type G">
    <location>
        <begin position="389"/>
        <end position="558"/>
    </location>
</feature>
<feature type="region of interest" description="Disordered" evidence="3">
    <location>
        <begin position="45"/>
        <end position="304"/>
    </location>
</feature>
<feature type="region of interest" description="G1" evidence="1">
    <location>
        <begin position="398"/>
        <end position="405"/>
    </location>
</feature>
<feature type="region of interest" description="G2" evidence="1">
    <location>
        <begin position="423"/>
        <end position="427"/>
    </location>
</feature>
<feature type="region of interest" description="G3" evidence="1">
    <location>
        <begin position="444"/>
        <end position="447"/>
    </location>
</feature>
<feature type="region of interest" description="G4" evidence="1">
    <location>
        <begin position="498"/>
        <end position="501"/>
    </location>
</feature>
<feature type="region of interest" description="G5" evidence="1">
    <location>
        <begin position="534"/>
        <end position="536"/>
    </location>
</feature>
<feature type="compositionally biased region" description="Polar residues" evidence="3">
    <location>
        <begin position="67"/>
        <end position="81"/>
    </location>
</feature>
<feature type="compositionally biased region" description="Basic and acidic residues" evidence="3">
    <location>
        <begin position="92"/>
        <end position="217"/>
    </location>
</feature>
<feature type="compositionally biased region" description="Basic residues" evidence="3">
    <location>
        <begin position="252"/>
        <end position="266"/>
    </location>
</feature>
<feature type="compositionally biased region" description="Basic and acidic residues" evidence="3">
    <location>
        <begin position="267"/>
        <end position="280"/>
    </location>
</feature>
<feature type="binding site" evidence="2">
    <location>
        <begin position="398"/>
        <end position="405"/>
    </location>
    <ligand>
        <name>GTP</name>
        <dbReference type="ChEBI" id="CHEBI:37565"/>
    </ligand>
</feature>
<feature type="binding site" evidence="2">
    <location>
        <begin position="444"/>
        <end position="448"/>
    </location>
    <ligand>
        <name>GTP</name>
        <dbReference type="ChEBI" id="CHEBI:37565"/>
    </ligand>
</feature>
<feature type="binding site" evidence="2">
    <location>
        <begin position="498"/>
        <end position="501"/>
    </location>
    <ligand>
        <name>GTP</name>
        <dbReference type="ChEBI" id="CHEBI:37565"/>
    </ligand>
</feature>
<feature type="modified residue" description="N6-acetyllysine" evidence="1">
    <location>
        <position position="808"/>
    </location>
</feature>
<accession>B7M076</accession>
<gene>
    <name evidence="2" type="primary">infB</name>
    <name type="ordered locus">ECIAI1_3318</name>
</gene>
<dbReference type="EMBL" id="CU928160">
    <property type="protein sequence ID" value="CAR00132.1"/>
    <property type="molecule type" value="Genomic_DNA"/>
</dbReference>
<dbReference type="RefSeq" id="WP_000133044.1">
    <property type="nucleotide sequence ID" value="NC_011741.1"/>
</dbReference>
<dbReference type="SMR" id="B7M076"/>
<dbReference type="GeneID" id="75206024"/>
<dbReference type="KEGG" id="ecr:ECIAI1_3318"/>
<dbReference type="HOGENOM" id="CLU_006301_6_3_6"/>
<dbReference type="GO" id="GO:0005829">
    <property type="term" value="C:cytosol"/>
    <property type="evidence" value="ECO:0007669"/>
    <property type="project" value="TreeGrafter"/>
</dbReference>
<dbReference type="GO" id="GO:0005525">
    <property type="term" value="F:GTP binding"/>
    <property type="evidence" value="ECO:0007669"/>
    <property type="project" value="UniProtKB-KW"/>
</dbReference>
<dbReference type="GO" id="GO:0003924">
    <property type="term" value="F:GTPase activity"/>
    <property type="evidence" value="ECO:0007669"/>
    <property type="project" value="UniProtKB-UniRule"/>
</dbReference>
<dbReference type="GO" id="GO:0097216">
    <property type="term" value="F:guanosine tetraphosphate binding"/>
    <property type="evidence" value="ECO:0007669"/>
    <property type="project" value="UniProtKB-ARBA"/>
</dbReference>
<dbReference type="GO" id="GO:0003743">
    <property type="term" value="F:translation initiation factor activity"/>
    <property type="evidence" value="ECO:0007669"/>
    <property type="project" value="UniProtKB-UniRule"/>
</dbReference>
<dbReference type="CDD" id="cd01887">
    <property type="entry name" value="IF2_eIF5B"/>
    <property type="match status" value="1"/>
</dbReference>
<dbReference type="CDD" id="cd03702">
    <property type="entry name" value="IF2_mtIF2_II"/>
    <property type="match status" value="1"/>
</dbReference>
<dbReference type="CDD" id="cd03692">
    <property type="entry name" value="mtIF2_IVc"/>
    <property type="match status" value="1"/>
</dbReference>
<dbReference type="FunFam" id="2.40.30.10:FF:000007">
    <property type="entry name" value="Translation initiation factor IF-2"/>
    <property type="match status" value="1"/>
</dbReference>
<dbReference type="FunFam" id="2.40.30.10:FF:000008">
    <property type="entry name" value="Translation initiation factor IF-2"/>
    <property type="match status" value="1"/>
</dbReference>
<dbReference type="FunFam" id="3.30.56.50:FF:000001">
    <property type="entry name" value="Translation initiation factor IF-2"/>
    <property type="match status" value="1"/>
</dbReference>
<dbReference type="FunFam" id="3.40.50.10050:FF:000001">
    <property type="entry name" value="Translation initiation factor IF-2"/>
    <property type="match status" value="1"/>
</dbReference>
<dbReference type="FunFam" id="3.40.50.300:FF:000019">
    <property type="entry name" value="Translation initiation factor IF-2"/>
    <property type="match status" value="1"/>
</dbReference>
<dbReference type="Gene3D" id="3.40.50.300">
    <property type="entry name" value="P-loop containing nucleotide triphosphate hydrolases"/>
    <property type="match status" value="1"/>
</dbReference>
<dbReference type="Gene3D" id="3.30.56.50">
    <property type="entry name" value="Putative DNA-binding domain, N-terminal subdomain of bacterial translation initiation factor IF2"/>
    <property type="match status" value="1"/>
</dbReference>
<dbReference type="Gene3D" id="2.40.30.10">
    <property type="entry name" value="Translation factors"/>
    <property type="match status" value="2"/>
</dbReference>
<dbReference type="Gene3D" id="3.40.50.10050">
    <property type="entry name" value="Translation initiation factor IF- 2, domain 3"/>
    <property type="match status" value="1"/>
</dbReference>
<dbReference type="HAMAP" id="MF_00100_B">
    <property type="entry name" value="IF_2_B"/>
    <property type="match status" value="1"/>
</dbReference>
<dbReference type="InterPro" id="IPR009061">
    <property type="entry name" value="DNA-bd_dom_put_sf"/>
</dbReference>
<dbReference type="InterPro" id="IPR053905">
    <property type="entry name" value="EF-G-like_DII"/>
</dbReference>
<dbReference type="InterPro" id="IPR004161">
    <property type="entry name" value="EFTu-like_2"/>
</dbReference>
<dbReference type="InterPro" id="IPR013575">
    <property type="entry name" value="IF2_assoc_dom_bac"/>
</dbReference>
<dbReference type="InterPro" id="IPR044145">
    <property type="entry name" value="IF2_II"/>
</dbReference>
<dbReference type="InterPro" id="IPR006847">
    <property type="entry name" value="IF2_N"/>
</dbReference>
<dbReference type="InterPro" id="IPR027417">
    <property type="entry name" value="P-loop_NTPase"/>
</dbReference>
<dbReference type="InterPro" id="IPR005225">
    <property type="entry name" value="Small_GTP-bd"/>
</dbReference>
<dbReference type="InterPro" id="IPR000795">
    <property type="entry name" value="T_Tr_GTP-bd_dom"/>
</dbReference>
<dbReference type="InterPro" id="IPR000178">
    <property type="entry name" value="TF_IF2_bacterial-like"/>
</dbReference>
<dbReference type="InterPro" id="IPR015760">
    <property type="entry name" value="TIF_IF2"/>
</dbReference>
<dbReference type="InterPro" id="IPR023115">
    <property type="entry name" value="TIF_IF2_dom3"/>
</dbReference>
<dbReference type="InterPro" id="IPR036925">
    <property type="entry name" value="TIF_IF2_dom3_sf"/>
</dbReference>
<dbReference type="InterPro" id="IPR009000">
    <property type="entry name" value="Transl_B-barrel_sf"/>
</dbReference>
<dbReference type="NCBIfam" id="TIGR00487">
    <property type="entry name" value="IF-2"/>
    <property type="match status" value="1"/>
</dbReference>
<dbReference type="NCBIfam" id="TIGR00231">
    <property type="entry name" value="small_GTP"/>
    <property type="match status" value="1"/>
</dbReference>
<dbReference type="PANTHER" id="PTHR43381:SF5">
    <property type="entry name" value="TR-TYPE G DOMAIN-CONTAINING PROTEIN"/>
    <property type="match status" value="1"/>
</dbReference>
<dbReference type="PANTHER" id="PTHR43381">
    <property type="entry name" value="TRANSLATION INITIATION FACTOR IF-2-RELATED"/>
    <property type="match status" value="1"/>
</dbReference>
<dbReference type="Pfam" id="PF22042">
    <property type="entry name" value="EF-G_D2"/>
    <property type="match status" value="1"/>
</dbReference>
<dbReference type="Pfam" id="PF00009">
    <property type="entry name" value="GTP_EFTU"/>
    <property type="match status" value="1"/>
</dbReference>
<dbReference type="Pfam" id="PF03144">
    <property type="entry name" value="GTP_EFTU_D2"/>
    <property type="match status" value="1"/>
</dbReference>
<dbReference type="Pfam" id="PF11987">
    <property type="entry name" value="IF-2"/>
    <property type="match status" value="1"/>
</dbReference>
<dbReference type="Pfam" id="PF08364">
    <property type="entry name" value="IF2_assoc"/>
    <property type="match status" value="1"/>
</dbReference>
<dbReference type="Pfam" id="PF04760">
    <property type="entry name" value="IF2_N"/>
    <property type="match status" value="2"/>
</dbReference>
<dbReference type="SUPFAM" id="SSF52156">
    <property type="entry name" value="Initiation factor IF2/eIF5b, domain 3"/>
    <property type="match status" value="1"/>
</dbReference>
<dbReference type="SUPFAM" id="SSF52540">
    <property type="entry name" value="P-loop containing nucleoside triphosphate hydrolases"/>
    <property type="match status" value="1"/>
</dbReference>
<dbReference type="SUPFAM" id="SSF46955">
    <property type="entry name" value="Putative DNA-binding domain"/>
    <property type="match status" value="1"/>
</dbReference>
<dbReference type="SUPFAM" id="SSF50447">
    <property type="entry name" value="Translation proteins"/>
    <property type="match status" value="2"/>
</dbReference>
<dbReference type="PROSITE" id="PS51722">
    <property type="entry name" value="G_TR_2"/>
    <property type="match status" value="1"/>
</dbReference>
<dbReference type="PROSITE" id="PS01176">
    <property type="entry name" value="IF2"/>
    <property type="match status" value="1"/>
</dbReference>
<comment type="function">
    <text evidence="2">One of the essential components for the initiation of protein synthesis. Protects formylmethionyl-tRNA from spontaneous hydrolysis and promotes its binding to the 30S ribosomal subunits. Also involved in the hydrolysis of GTP during the formation of the 70S ribosomal complex.</text>
</comment>
<comment type="subcellular location">
    <subcellularLocation>
        <location evidence="2">Cytoplasm</location>
    </subcellularLocation>
</comment>
<comment type="similarity">
    <text evidence="2">Belongs to the TRAFAC class translation factor GTPase superfamily. Classic translation factor GTPase family. IF-2 subfamily.</text>
</comment>
<protein>
    <recommendedName>
        <fullName evidence="2">Translation initiation factor IF-2</fullName>
    </recommendedName>
</protein>